<keyword id="KW-0025">Alternative splicing</keyword>
<keyword id="KW-1015">Disulfide bond</keyword>
<keyword id="KW-0245">EGF-like domain</keyword>
<keyword id="KW-0391">Immunity</keyword>
<keyword id="KW-0399">Innate immunity</keyword>
<keyword id="KW-0430">Lectin</keyword>
<keyword id="KW-1185">Reference proteome</keyword>
<keyword id="KW-0677">Repeat</keyword>
<keyword id="KW-0964">Secreted</keyword>
<keyword id="KW-0732">Signal</keyword>
<sequence>MRNWVLIAALAVICLATEQELSHKDRIRAVLRSWSPASQKQFFEPVREQKYRTMEERVIFLDTHHISKRSIAEPHVLAGMATRGCNKPGYTGETCQYPLCSARNPYIPNNDGFDDIAIDAYNLANCSESYIVVVDETMRNIKIEVETASALNPTFYLQAENGDLIFPDESIQLPTMFTANYLHLPPGQYMLGPRADTSEQFCTMMMSSRSSIHVSGGFTSGDQAERSDYPNLKFTYFDTESVVAIHAQGLDFPGQIQAIGFTGAENHISRYIPMTTRFNCTYPYILERYTCRKTSNNDAGHNLIQVEGVTNSGYKFRRIVPYQCVLPPVTTTTPAVPTTPAAPITSCQNGGQLLTDSNGVAYCYCFGLYSGSTCSQMLCANGGFLPTPTSDRCQCPEGFSGFHCQNILCTDMSGFDFNAENPTLTLVIRSRSQLSAVIEQATESVQSIVDLLASEPGYLSKFIVVLFDNGKLLVNRQYDSWDAAMVDLTKAIHSAPSEGGCDDVVMSAVASALSLYPTNKSPIYVITDATPNDSAEKETVFHLESYWRAPIYFIYVQPSPADGCNSSPDNSAYRDMVDMAARSSGNTFYFSDRSTISTFFYRHMLNTLFRSQLVLSGDYSHCSSQNLYKSAAFDLSVDYVTIVATGTNLTLVVTSPTGQYPTFNTAFSDGVNYVWTYNSPVAGQWFFSIRSLEPEAACTFKVYQKKFNFGGQTQYSPDYDIFWSFASTLTSAAGVLRQPVLGFDSSPVFHVTNYPQFLSMDRVHANLQIYAIRDGVQTEVYGSSGMYRDACEFNFYFPPFTCRVPEEVLYFNFFARDNNDMALQRAGTMFCAAVHPTPPPDHQCQNGGVMNPSNTTCFCTPEFTGTYCQNIICYNGGTASGDHCVCPPGYAGESCEMARCIETGPNPEFIRYGVDMVFAVEITQNSIASLSMLNINFQEILRDVLMQNRGWIRNFVLVGFNSTWGGPIAESPADNLTAITTALRTLASSVPADTGCTVKLWDALNYAIFSRQMAPGSFVEIFQTTPEDDTDTRSLGLFYDMSRTMELVLYGFLTSNPRLQPEGFVCNATVENYYTLLGIVSGSTGTTYSLQANEISNAVRLIPLQFSNGQVTFNALDDCRHDDGLITYFPVDAYTQTIQIQTFGYGTTIQVYTGAGVMAEALELFYDDFTGQSVYEIRKACDEGWEPIGQYCIKFMATVENILPMPQAKAFCASAGGFLVDDLTDDKNGFLKSVAANTQFWTGLFKNNDGQFYWDRGTGINPDLLNQPITYWADGEPSDDPTRQCVYFNGRSGDANKVWTTDTCAEPRAFACQKHRYDADHRPNVIGDDDLPAGWWYAKVKSNPPSGYPNMCTMSVRVQSSLQIVTGFSTKIGNDFPLPDPIQDSTENRLISYVHSVDNENRVPILTDAILWDAYNGTFYNGLKYQVRFGCQFAWVTQDFPCPNGDSQANEFGVLHVGEDEFGNTFQRLTFGHCSRAQITCGNGGIRQNGQCVCTDYWTGSRCTVPICVNGGTRNPDEATCSCPDGYEGPNCQFEVCQPNVPQLFSNDRKSLLMVVETTRQNSDTVNQLIANLKNIVSAVTNNMPLWFTNFGLVTFDTTGRTFEKFDYTSIDDLITDLTTQSNAISTDGVCSMPYLGVLAHLLEHDDVIAMPNSEIFLVTPAGPSDLGNYVETMEVLFNTQAHLHYVVSKTANCATFDGVNNVRDMTWLGYGSSGNILFTDPANIVNLFNSYLPTLYGASVLQDPTGITNYTCSDGSLPWFVPVDINTTFIYVTTSAEFGSLSVKDPLGAAHSATPVYNVNDQKIYAIEVDRLGGIWTLQLVQPPGLCLAHVYSTGGAKVYTKFSMPNPIGGKPDPLGSHQDGRFVQPTAGFDNVAVFHLAGNPFHRGQLQYVEIFDIGANSITNILRSELYVRAGCSYEYYSDLFTCNGDMIAVYVHGVDEANQKFRRQEIVICNGRSPTTNQPATGTIGPITMPTQQTALTQGPVTQQTQVPGTQPTQGPVATTQNPYTSAQFDVVFMIDGSQSAQSSFDSLTKFVQTFMVSFNVGQSGARVGLIVVGGDITNPIPPAANLNSLSSQAMLNSNLAQLSGGYTDFEDAGQILNYTLQIVSSPDFMAANNGYRSGISNHVLIYLTTTTAFDTDPTPAAQTILAQKQYGIITIGYGGATDNNKLQTISGGSACSFTAPDFASLNNQIKTIQQLILNANANGGVYCINN</sequence>
<feature type="signal peptide" evidence="1">
    <location>
        <begin position="1"/>
        <end position="16"/>
    </location>
</feature>
<feature type="chain" id="PRO_5007283654" description="Protein irg-7" evidence="7">
    <location>
        <begin position="17"/>
        <end position="2217"/>
    </location>
</feature>
<feature type="domain" description="EGF-like 1" evidence="3">
    <location>
        <begin position="370"/>
        <end position="405"/>
    </location>
</feature>
<feature type="domain" description="EGF-like 2" evidence="3">
    <location>
        <begin position="864"/>
        <end position="896"/>
    </location>
</feature>
<feature type="domain" description="C-type lectin" evidence="2">
    <location>
        <begin position="1188"/>
        <end position="1313"/>
    </location>
</feature>
<feature type="domain" description="EGF-like 3" evidence="3">
    <location>
        <begin position="1499"/>
        <end position="1533"/>
    </location>
</feature>
<feature type="domain" description="VWFA" evidence="4">
    <location>
        <begin position="2016"/>
        <end position="2202"/>
    </location>
</feature>
<feature type="disulfide bond" evidence="3">
    <location>
        <begin position="379"/>
        <end position="393"/>
    </location>
</feature>
<feature type="disulfide bond" evidence="3">
    <location>
        <begin position="395"/>
        <end position="404"/>
    </location>
</feature>
<feature type="disulfide bond" evidence="3">
    <location>
        <begin position="868"/>
        <end position="873"/>
    </location>
</feature>
<feature type="disulfide bond" evidence="3">
    <location>
        <begin position="886"/>
        <end position="895"/>
    </location>
</feature>
<feature type="disulfide bond" evidence="2">
    <location>
        <begin position="1212"/>
        <end position="1312"/>
    </location>
</feature>
<feature type="disulfide bond" evidence="2">
    <location>
        <begin position="1285"/>
        <end position="1304"/>
    </location>
</feature>
<feature type="disulfide bond" evidence="3">
    <location>
        <begin position="1508"/>
        <end position="1521"/>
    </location>
</feature>
<feature type="disulfide bond" evidence="3">
    <location>
        <begin position="1523"/>
        <end position="1532"/>
    </location>
</feature>
<feature type="splice variant" id="VSP_058914" description="In isoform a." evidence="7">
    <location>
        <begin position="58"/>
        <end position="60"/>
    </location>
</feature>
<accession>A0A131MBU3</accession>
<accession>Q20219</accession>
<name>IRG7_CAEEL</name>
<organism evidence="8">
    <name type="scientific">Caenorhabditis elegans</name>
    <dbReference type="NCBI Taxonomy" id="6239"/>
    <lineage>
        <taxon>Eukaryota</taxon>
        <taxon>Metazoa</taxon>
        <taxon>Ecdysozoa</taxon>
        <taxon>Nematoda</taxon>
        <taxon>Chromadorea</taxon>
        <taxon>Rhabditida</taxon>
        <taxon>Rhabditina</taxon>
        <taxon>Rhabditomorpha</taxon>
        <taxon>Rhabditoidea</taxon>
        <taxon>Rhabditidae</taxon>
        <taxon>Peloderinae</taxon>
        <taxon>Caenorhabditis</taxon>
    </lineage>
</organism>
<reference evidence="8" key="1">
    <citation type="journal article" date="1998" name="Science">
        <title>Genome sequence of the nematode C. elegans: a platform for investigating biology.</title>
        <authorList>
            <consortium name="The C. elegans sequencing consortium"/>
        </authorList>
    </citation>
    <scope>NUCLEOTIDE SEQUENCE [LARGE SCALE GENOMIC DNA]</scope>
    <source>
        <strain evidence="8">Bristol N2</strain>
    </source>
</reference>
<reference evidence="7" key="2">
    <citation type="journal article" date="2017" name="PLoS Genet.">
        <title>Innate immunity mediated longevity and longevity induced by germ cell removal converge on the C-type lectin domain protein IRG-7.</title>
        <authorList>
            <person name="Yunger E."/>
            <person name="Safra M."/>
            <person name="Levi-Ferber M."/>
            <person name="Haviv-Chesner A."/>
            <person name="Henis-Korenblit S."/>
        </authorList>
    </citation>
    <scope>FUNCTION</scope>
    <scope>DEVELOPMENTAL STAGE</scope>
    <scope>INDUCTION</scope>
    <scope>DISRUPTION PHENOTYPE</scope>
</reference>
<comment type="function">
    <text evidence="5">Plays a role in innate immunity, probably via the atf-7 pathway, to confer resistance to pathogenic bacteria. May also play a role in the regulation of longevity.</text>
</comment>
<comment type="subcellular location">
    <subcellularLocation>
        <location evidence="7">Secreted</location>
    </subcellularLocation>
</comment>
<comment type="alternative products">
    <event type="alternative splicing"/>
    <isoform>
        <id>A0A131MBU3-1</id>
        <name evidence="10">b</name>
        <sequence type="displayed"/>
    </isoform>
    <isoform>
        <id>A0A131MBU3-2</id>
        <name evidence="9">a</name>
        <sequence type="described" ref="VSP_058914"/>
    </isoform>
</comment>
<comment type="developmental stage">
    <text evidence="5">Expressed in the posterior cells of the intestine in L4 larva.</text>
</comment>
<comment type="induction">
    <text evidence="5">Up-regulated following infection with P.luminescens subsp Hb and E.faecalis bacteria.</text>
</comment>
<comment type="disruption phenotype">
    <text evidence="5">RNAi-mediated knockdown in larvae results in reduced survival following infection with the pathogenic bacterium P.luminescens. RNAi-mediated knockdown in a glp-1 e2141 mutant background (in which germ cells are deleted) rescues the increased lifespan phenotype of the glp-1 mutant.</text>
</comment>
<gene>
    <name evidence="6 10" type="primary">irg-7</name>
    <name evidence="10" type="synonym">drd-2</name>
    <name evidence="10" type="synonym">upr-1</name>
    <name evidence="10" type="ORF">F40F4.6</name>
</gene>
<dbReference type="EMBL" id="BX284606">
    <property type="protein sequence ID" value="CCD70146.2"/>
    <property type="molecule type" value="Genomic_DNA"/>
</dbReference>
<dbReference type="EMBL" id="BX284606">
    <property type="protein sequence ID" value="CZR14621.1"/>
    <property type="molecule type" value="Genomic_DNA"/>
</dbReference>
<dbReference type="PIR" id="T16305">
    <property type="entry name" value="T16305"/>
</dbReference>
<dbReference type="RefSeq" id="NP_001309693.1">
    <property type="nucleotide sequence ID" value="NM_001322616.1"/>
</dbReference>
<dbReference type="RefSeq" id="NP_001362066.1">
    <molecule id="A0A131MBU3-1"/>
    <property type="nucleotide sequence ID" value="NM_001374988.3"/>
</dbReference>
<dbReference type="RefSeq" id="NP_508552.2">
    <molecule id="A0A131MBU3-2"/>
    <property type="nucleotide sequence ID" value="NM_076151.7"/>
</dbReference>
<dbReference type="SMR" id="A0A131MBU3"/>
<dbReference type="FunCoup" id="A0A131MBU3">
    <property type="interactions" value="275"/>
</dbReference>
<dbReference type="STRING" id="6239.F40F4.6b.1"/>
<dbReference type="PaxDb" id="6239-F40F4.6"/>
<dbReference type="EnsemblMetazoa" id="F40F4.6a.1">
    <molecule id="A0A131MBU3-2"/>
    <property type="protein sequence ID" value="F40F4.6a.1"/>
    <property type="gene ID" value="WBGene00018237"/>
</dbReference>
<dbReference type="EnsemblMetazoa" id="F40F4.6b.1">
    <molecule id="A0A131MBU3-1"/>
    <property type="protein sequence ID" value="F40F4.6b.1"/>
    <property type="gene ID" value="WBGene00018237"/>
</dbReference>
<dbReference type="GeneID" id="180613"/>
<dbReference type="KEGG" id="cel:CELE_F40F4.6"/>
<dbReference type="UCSC" id="F40F4.6">
    <property type="organism name" value="c. elegans"/>
</dbReference>
<dbReference type="AGR" id="WB:WBGene00018237"/>
<dbReference type="CTD" id="180613"/>
<dbReference type="WormBase" id="F40F4.6a">
    <molecule id="A0A131MBU3-2"/>
    <property type="protein sequence ID" value="CE47861"/>
    <property type="gene ID" value="WBGene00018237"/>
    <property type="gene designation" value="irg-7"/>
</dbReference>
<dbReference type="WormBase" id="F40F4.6b">
    <molecule id="A0A131MBU3-1"/>
    <property type="protein sequence ID" value="CE51544"/>
    <property type="gene ID" value="WBGene00018237"/>
    <property type="gene designation" value="irg-7"/>
</dbReference>
<dbReference type="eggNOG" id="ENOG502SD0F">
    <property type="taxonomic scope" value="Eukaryota"/>
</dbReference>
<dbReference type="GeneTree" id="ENSGT01030000234566"/>
<dbReference type="InParanoid" id="A0A131MBU3"/>
<dbReference type="OMA" id="WGGPIAE"/>
<dbReference type="OrthoDB" id="5781816at2759"/>
<dbReference type="PRO" id="PR:A0A131MBU3"/>
<dbReference type="Proteomes" id="UP000001940">
    <property type="component" value="Chromosome X"/>
</dbReference>
<dbReference type="Bgee" id="WBGene00018237">
    <property type="expression patterns" value="Expressed in larva and 3 other cell types or tissues"/>
</dbReference>
<dbReference type="GO" id="GO:0005576">
    <property type="term" value="C:extracellular region"/>
    <property type="evidence" value="ECO:0007669"/>
    <property type="project" value="UniProtKB-SubCell"/>
</dbReference>
<dbReference type="GO" id="GO:0030246">
    <property type="term" value="F:carbohydrate binding"/>
    <property type="evidence" value="ECO:0007669"/>
    <property type="project" value="UniProtKB-KW"/>
</dbReference>
<dbReference type="GO" id="GO:0045087">
    <property type="term" value="P:innate immune response"/>
    <property type="evidence" value="ECO:0007669"/>
    <property type="project" value="UniProtKB-KW"/>
</dbReference>
<dbReference type="CDD" id="cd00037">
    <property type="entry name" value="CLECT"/>
    <property type="match status" value="1"/>
</dbReference>
<dbReference type="CDD" id="cd00054">
    <property type="entry name" value="EGF_CA"/>
    <property type="match status" value="1"/>
</dbReference>
<dbReference type="CDD" id="cd01450">
    <property type="entry name" value="vWFA_subfamily_ECM"/>
    <property type="match status" value="1"/>
</dbReference>
<dbReference type="Gene3D" id="2.10.25.10">
    <property type="entry name" value="Laminin"/>
    <property type="match status" value="2"/>
</dbReference>
<dbReference type="Gene3D" id="3.10.100.10">
    <property type="entry name" value="Mannose-Binding Protein A, subunit A"/>
    <property type="match status" value="1"/>
</dbReference>
<dbReference type="Gene3D" id="3.40.50.410">
    <property type="entry name" value="von Willebrand factor, type A domain"/>
    <property type="match status" value="1"/>
</dbReference>
<dbReference type="InterPro" id="IPR001304">
    <property type="entry name" value="C-type_lectin-like"/>
</dbReference>
<dbReference type="InterPro" id="IPR016186">
    <property type="entry name" value="C-type_lectin-like/link_sf"/>
</dbReference>
<dbReference type="InterPro" id="IPR016187">
    <property type="entry name" value="CTDL_fold"/>
</dbReference>
<dbReference type="InterPro" id="IPR000742">
    <property type="entry name" value="EGF-like_dom"/>
</dbReference>
<dbReference type="InterPro" id="IPR056861">
    <property type="entry name" value="HMCN1-like_VWA"/>
</dbReference>
<dbReference type="InterPro" id="IPR053295">
    <property type="entry name" value="Innate_immunity_reg"/>
</dbReference>
<dbReference type="InterPro" id="IPR006582">
    <property type="entry name" value="MD_domain"/>
</dbReference>
<dbReference type="InterPro" id="IPR002035">
    <property type="entry name" value="VWF_A"/>
</dbReference>
<dbReference type="InterPro" id="IPR036465">
    <property type="entry name" value="vWFA_dom_sf"/>
</dbReference>
<dbReference type="PANTHER" id="PTHR47324:SF1">
    <property type="entry name" value="EGF-LIKE DOMAIN-CONTAINING PROTEIN-RELATED"/>
    <property type="match status" value="1"/>
</dbReference>
<dbReference type="PANTHER" id="PTHR47324">
    <property type="entry name" value="PROTEIN IRG-7-RELATED"/>
    <property type="match status" value="1"/>
</dbReference>
<dbReference type="Pfam" id="PF23623">
    <property type="entry name" value="GBD_IRG7_N"/>
    <property type="match status" value="1"/>
</dbReference>
<dbReference type="Pfam" id="PF24415">
    <property type="entry name" value="Ig_Irg-7"/>
    <property type="match status" value="2"/>
</dbReference>
<dbReference type="Pfam" id="PF00059">
    <property type="entry name" value="Lectin_C"/>
    <property type="match status" value="1"/>
</dbReference>
<dbReference type="Pfam" id="PF00092">
    <property type="entry name" value="VWA"/>
    <property type="match status" value="1"/>
</dbReference>
<dbReference type="Pfam" id="PF25106">
    <property type="entry name" value="VWA_4"/>
    <property type="match status" value="1"/>
</dbReference>
<dbReference type="SMART" id="SM00034">
    <property type="entry name" value="CLECT"/>
    <property type="match status" value="1"/>
</dbReference>
<dbReference type="SMART" id="SM00181">
    <property type="entry name" value="EGF"/>
    <property type="match status" value="3"/>
</dbReference>
<dbReference type="SMART" id="SM00604">
    <property type="entry name" value="MD"/>
    <property type="match status" value="2"/>
</dbReference>
<dbReference type="SMART" id="SM00327">
    <property type="entry name" value="VWA"/>
    <property type="match status" value="1"/>
</dbReference>
<dbReference type="SUPFAM" id="SSF56436">
    <property type="entry name" value="C-type lectin-like"/>
    <property type="match status" value="1"/>
</dbReference>
<dbReference type="SUPFAM" id="SSF53300">
    <property type="entry name" value="vWA-like"/>
    <property type="match status" value="1"/>
</dbReference>
<dbReference type="PROSITE" id="PS50041">
    <property type="entry name" value="C_TYPE_LECTIN_2"/>
    <property type="match status" value="1"/>
</dbReference>
<dbReference type="PROSITE" id="PS00022">
    <property type="entry name" value="EGF_1"/>
    <property type="match status" value="6"/>
</dbReference>
<dbReference type="PROSITE" id="PS01186">
    <property type="entry name" value="EGF_2"/>
    <property type="match status" value="3"/>
</dbReference>
<dbReference type="PROSITE" id="PS50026">
    <property type="entry name" value="EGF_3"/>
    <property type="match status" value="3"/>
</dbReference>
<dbReference type="PROSITE" id="PS50234">
    <property type="entry name" value="VWFA"/>
    <property type="match status" value="1"/>
</dbReference>
<evidence type="ECO:0000255" key="1"/>
<evidence type="ECO:0000255" key="2">
    <source>
        <dbReference type="PROSITE-ProRule" id="PRU00040"/>
    </source>
</evidence>
<evidence type="ECO:0000255" key="3">
    <source>
        <dbReference type="PROSITE-ProRule" id="PRU00076"/>
    </source>
</evidence>
<evidence type="ECO:0000255" key="4">
    <source>
        <dbReference type="PROSITE-ProRule" id="PRU00219"/>
    </source>
</evidence>
<evidence type="ECO:0000269" key="5">
    <source>
    </source>
</evidence>
<evidence type="ECO:0000303" key="6">
    <source>
    </source>
</evidence>
<evidence type="ECO:0000305" key="7"/>
<evidence type="ECO:0000312" key="8">
    <source>
        <dbReference type="Proteomes" id="UP000001940"/>
    </source>
</evidence>
<evidence type="ECO:0000312" key="9">
    <source>
        <dbReference type="WormBase" id="F40F4.6a"/>
    </source>
</evidence>
<evidence type="ECO:0000312" key="10">
    <source>
        <dbReference type="WormBase" id="F40F4.6b"/>
    </source>
</evidence>
<protein>
    <recommendedName>
        <fullName evidence="7">Protein irg-7</fullName>
    </recommendedName>
    <alternativeName>
        <fullName evidence="7">Infection response protein 7</fullName>
    </alternativeName>
</protein>
<proteinExistence type="evidence at transcript level"/>